<proteinExistence type="evidence at transcript level"/>
<reference key="1">
    <citation type="journal article" date="2005" name="Plant Cell">
        <title>Plasmodesmal-associated protein kinase in tobacco and Arabidopsis recognizes a subset of non-cell-autonomous proteins.</title>
        <authorList>
            <person name="Lee J.-Y."/>
            <person name="Taoka K."/>
            <person name="Yoo B.-C."/>
            <person name="Ben-Nissan G."/>
            <person name="Kim D.-J."/>
            <person name="Lucas W.J."/>
        </authorList>
    </citation>
    <scope>NUCLEOTIDE SEQUENCE [MRNA]</scope>
    <scope>SUBCELLULAR LOCATION</scope>
</reference>
<reference key="2">
    <citation type="journal article" date="1997" name="DNA Res.">
        <title>Structural analysis of Arabidopsis thaliana chromosome 5. I. Sequence features of the 1.6 Mb regions covered by twenty physically assigned P1 clones.</title>
        <authorList>
            <person name="Sato S."/>
            <person name="Kotani H."/>
            <person name="Nakamura Y."/>
            <person name="Kaneko T."/>
            <person name="Asamizu E."/>
            <person name="Fukami M."/>
            <person name="Miyajima N."/>
            <person name="Tabata S."/>
        </authorList>
    </citation>
    <scope>NUCLEOTIDE SEQUENCE [LARGE SCALE GENOMIC DNA]</scope>
    <source>
        <strain>cv. Columbia</strain>
    </source>
</reference>
<reference key="3">
    <citation type="journal article" date="2017" name="Plant J.">
        <title>Araport11: a complete reannotation of the Arabidopsis thaliana reference genome.</title>
        <authorList>
            <person name="Cheng C.Y."/>
            <person name="Krishnakumar V."/>
            <person name="Chan A.P."/>
            <person name="Thibaud-Nissen F."/>
            <person name="Schobel S."/>
            <person name="Town C.D."/>
        </authorList>
    </citation>
    <scope>GENOME REANNOTATION</scope>
    <source>
        <strain>cv. Columbia</strain>
    </source>
</reference>
<reference key="4">
    <citation type="journal article" date="2003" name="Science">
        <title>Empirical analysis of transcriptional activity in the Arabidopsis genome.</title>
        <authorList>
            <person name="Yamada K."/>
            <person name="Lim J."/>
            <person name="Dale J.M."/>
            <person name="Chen H."/>
            <person name="Shinn P."/>
            <person name="Palm C.J."/>
            <person name="Southwick A.M."/>
            <person name="Wu H.C."/>
            <person name="Kim C.J."/>
            <person name="Nguyen M."/>
            <person name="Pham P.K."/>
            <person name="Cheuk R.F."/>
            <person name="Karlin-Newmann G."/>
            <person name="Liu S.X."/>
            <person name="Lam B."/>
            <person name="Sakano H."/>
            <person name="Wu T."/>
            <person name="Yu G."/>
            <person name="Miranda M."/>
            <person name="Quach H.L."/>
            <person name="Tripp M."/>
            <person name="Chang C.H."/>
            <person name="Lee J.M."/>
            <person name="Toriumi M.J."/>
            <person name="Chan M.M."/>
            <person name="Tang C.C."/>
            <person name="Onodera C.S."/>
            <person name="Deng J.M."/>
            <person name="Akiyama K."/>
            <person name="Ansari Y."/>
            <person name="Arakawa T."/>
            <person name="Banh J."/>
            <person name="Banno F."/>
            <person name="Bowser L."/>
            <person name="Brooks S.Y."/>
            <person name="Carninci P."/>
            <person name="Chao Q."/>
            <person name="Choy N."/>
            <person name="Enju A."/>
            <person name="Goldsmith A.D."/>
            <person name="Gurjal M."/>
            <person name="Hansen N.F."/>
            <person name="Hayashizaki Y."/>
            <person name="Johnson-Hopson C."/>
            <person name="Hsuan V.W."/>
            <person name="Iida K."/>
            <person name="Karnes M."/>
            <person name="Khan S."/>
            <person name="Koesema E."/>
            <person name="Ishida J."/>
            <person name="Jiang P.X."/>
            <person name="Jones T."/>
            <person name="Kawai J."/>
            <person name="Kamiya A."/>
            <person name="Meyers C."/>
            <person name="Nakajima M."/>
            <person name="Narusaka M."/>
            <person name="Seki M."/>
            <person name="Sakurai T."/>
            <person name="Satou M."/>
            <person name="Tamse R."/>
            <person name="Vaysberg M."/>
            <person name="Wallender E.K."/>
            <person name="Wong C."/>
            <person name="Yamamura Y."/>
            <person name="Yuan S."/>
            <person name="Shinozaki K."/>
            <person name="Davis R.W."/>
            <person name="Theologis A."/>
            <person name="Ecker J.R."/>
        </authorList>
    </citation>
    <scope>NUCLEOTIDE SEQUENCE [LARGE SCALE MRNA]</scope>
    <source>
        <strain>cv. Columbia</strain>
    </source>
</reference>
<reference key="5">
    <citation type="submission" date="2005-02" db="EMBL/GenBank/DDBJ databases">
        <title>Arabidopsis ORF clones.</title>
        <authorList>
            <person name="Cheuk R.F."/>
            <person name="Chen H."/>
            <person name="Kim C.J."/>
            <person name="Shinn P."/>
            <person name="Ecker J.R."/>
        </authorList>
    </citation>
    <scope>NUCLEOTIDE SEQUENCE [LARGE SCALE MRNA]</scope>
    <source>
        <strain>cv. Columbia</strain>
    </source>
</reference>
<organism>
    <name type="scientific">Arabidopsis thaliana</name>
    <name type="common">Mouse-ear cress</name>
    <dbReference type="NCBI Taxonomy" id="3702"/>
    <lineage>
        <taxon>Eukaryota</taxon>
        <taxon>Viridiplantae</taxon>
        <taxon>Streptophyta</taxon>
        <taxon>Embryophyta</taxon>
        <taxon>Tracheophyta</taxon>
        <taxon>Spermatophyta</taxon>
        <taxon>Magnoliopsida</taxon>
        <taxon>eudicotyledons</taxon>
        <taxon>Gunneridae</taxon>
        <taxon>Pentapetalae</taxon>
        <taxon>rosids</taxon>
        <taxon>malvids</taxon>
        <taxon>Brassicales</taxon>
        <taxon>Brassicaceae</taxon>
        <taxon>Camelineae</taxon>
        <taxon>Arabidopsis</taxon>
    </lineage>
</organism>
<keyword id="KW-0067">ATP-binding</keyword>
<keyword id="KW-0963">Cytoplasm</keyword>
<keyword id="KW-0418">Kinase</keyword>
<keyword id="KW-0547">Nucleotide-binding</keyword>
<keyword id="KW-1185">Reference proteome</keyword>
<keyword id="KW-0723">Serine/threonine-protein kinase</keyword>
<keyword id="KW-0808">Transferase</keyword>
<comment type="function">
    <text evidence="1">Casein kinases are operationally defined by their preferential utilization of acidic proteins such as caseins as substrates. It can phosphorylate a large number of proteins.</text>
</comment>
<comment type="catalytic activity">
    <reaction evidence="6">
        <text>L-seryl-[protein] + ATP = O-phospho-L-seryl-[protein] + ADP + H(+)</text>
        <dbReference type="Rhea" id="RHEA:17989"/>
        <dbReference type="Rhea" id="RHEA-COMP:9863"/>
        <dbReference type="Rhea" id="RHEA-COMP:11604"/>
        <dbReference type="ChEBI" id="CHEBI:15378"/>
        <dbReference type="ChEBI" id="CHEBI:29999"/>
        <dbReference type="ChEBI" id="CHEBI:30616"/>
        <dbReference type="ChEBI" id="CHEBI:83421"/>
        <dbReference type="ChEBI" id="CHEBI:456216"/>
        <dbReference type="EC" id="2.7.11.1"/>
    </reaction>
</comment>
<comment type="catalytic activity">
    <reaction evidence="6">
        <text>L-threonyl-[protein] + ATP = O-phospho-L-threonyl-[protein] + ADP + H(+)</text>
        <dbReference type="Rhea" id="RHEA:46608"/>
        <dbReference type="Rhea" id="RHEA-COMP:11060"/>
        <dbReference type="Rhea" id="RHEA-COMP:11605"/>
        <dbReference type="ChEBI" id="CHEBI:15378"/>
        <dbReference type="ChEBI" id="CHEBI:30013"/>
        <dbReference type="ChEBI" id="CHEBI:30616"/>
        <dbReference type="ChEBI" id="CHEBI:61977"/>
        <dbReference type="ChEBI" id="CHEBI:456216"/>
        <dbReference type="EC" id="2.7.11.1"/>
    </reaction>
</comment>
<comment type="subunit">
    <text evidence="1">Monomer.</text>
</comment>
<comment type="subcellular location">
    <subcellularLocation>
        <location evidence="4">Cytoplasm</location>
    </subcellularLocation>
</comment>
<comment type="PTM">
    <text evidence="1">Autophosphorylated.</text>
</comment>
<comment type="similarity">
    <text evidence="6">Belongs to the protein kinase superfamily. CK1 Ser/Thr protein kinase family. Casein kinase I subfamily.</text>
</comment>
<feature type="chain" id="PRO_0000437146" description="Casein kinase 1-like protein 7">
    <location>
        <begin position="1"/>
        <end position="476"/>
    </location>
</feature>
<feature type="domain" description="Protein kinase" evidence="2">
    <location>
        <begin position="9"/>
        <end position="278"/>
    </location>
</feature>
<feature type="region of interest" description="Disordered" evidence="3">
    <location>
        <begin position="299"/>
        <end position="324"/>
    </location>
</feature>
<feature type="region of interest" description="Disordered" evidence="3">
    <location>
        <begin position="340"/>
        <end position="464"/>
    </location>
</feature>
<feature type="compositionally biased region" description="Basic and acidic residues" evidence="3">
    <location>
        <begin position="357"/>
        <end position="367"/>
    </location>
</feature>
<feature type="compositionally biased region" description="Low complexity" evidence="3">
    <location>
        <begin position="382"/>
        <end position="422"/>
    </location>
</feature>
<feature type="compositionally biased region" description="Gly residues" evidence="3">
    <location>
        <begin position="423"/>
        <end position="432"/>
    </location>
</feature>
<feature type="active site" description="Proton acceptor" evidence="2">
    <location>
        <position position="128"/>
    </location>
</feature>
<feature type="binding site" evidence="2">
    <location>
        <begin position="15"/>
        <end position="23"/>
    </location>
    <ligand>
        <name>ATP</name>
        <dbReference type="ChEBI" id="CHEBI:30616"/>
    </ligand>
</feature>
<feature type="binding site" evidence="2">
    <location>
        <position position="38"/>
    </location>
    <ligand>
        <name>ATP</name>
        <dbReference type="ChEBI" id="CHEBI:30616"/>
    </ligand>
</feature>
<feature type="sequence conflict" description="In Ref. 4; AAL58949." evidence="6" ref="4">
    <original>M</original>
    <variation>I</variation>
    <location>
        <position position="136"/>
    </location>
</feature>
<evidence type="ECO:0000250" key="1">
    <source>
        <dbReference type="UniProtKB" id="P48730"/>
    </source>
</evidence>
<evidence type="ECO:0000255" key="2">
    <source>
        <dbReference type="PROSITE-ProRule" id="PRU00159"/>
    </source>
</evidence>
<evidence type="ECO:0000256" key="3">
    <source>
        <dbReference type="SAM" id="MobiDB-lite"/>
    </source>
</evidence>
<evidence type="ECO:0000269" key="4">
    <source>
    </source>
</evidence>
<evidence type="ECO:0000303" key="5">
    <source>
    </source>
</evidence>
<evidence type="ECO:0000305" key="6"/>
<evidence type="ECO:0000312" key="7">
    <source>
        <dbReference type="Araport" id="AT5G44100"/>
    </source>
</evidence>
<evidence type="ECO:0000312" key="8">
    <source>
        <dbReference type="EMBL" id="BAB10977.1"/>
    </source>
</evidence>
<accession>Q9FFH8</accession>
<accession>Q8W0Z0</accession>
<dbReference type="EC" id="2.7.11.1" evidence="6"/>
<dbReference type="EMBL" id="AY943846">
    <property type="protein sequence ID" value="AAY24536.1"/>
    <property type="molecule type" value="mRNA"/>
</dbReference>
<dbReference type="EMBL" id="AB005239">
    <property type="protein sequence ID" value="BAB10977.1"/>
    <property type="molecule type" value="Genomic_DNA"/>
</dbReference>
<dbReference type="EMBL" id="CP002688">
    <property type="protein sequence ID" value="AED95058.1"/>
    <property type="molecule type" value="Genomic_DNA"/>
</dbReference>
<dbReference type="EMBL" id="CP002688">
    <property type="protein sequence ID" value="ANM69172.1"/>
    <property type="molecule type" value="Genomic_DNA"/>
</dbReference>
<dbReference type="EMBL" id="AF462864">
    <property type="protein sequence ID" value="AAL58949.1"/>
    <property type="molecule type" value="mRNA"/>
</dbReference>
<dbReference type="EMBL" id="BT015795">
    <property type="protein sequence ID" value="AAU90085.1"/>
    <property type="molecule type" value="mRNA"/>
</dbReference>
<dbReference type="EMBL" id="BT021097">
    <property type="protein sequence ID" value="AAX12867.1"/>
    <property type="molecule type" value="mRNA"/>
</dbReference>
<dbReference type="RefSeq" id="NP_001330873.1">
    <property type="nucleotide sequence ID" value="NM_001344533.1"/>
</dbReference>
<dbReference type="RefSeq" id="NP_199223.1">
    <property type="nucleotide sequence ID" value="NM_123777.4"/>
</dbReference>
<dbReference type="SMR" id="Q9FFH8"/>
<dbReference type="FunCoup" id="Q9FFH8">
    <property type="interactions" value="4368"/>
</dbReference>
<dbReference type="STRING" id="3702.Q9FFH8"/>
<dbReference type="iPTMnet" id="Q9FFH8"/>
<dbReference type="PaxDb" id="3702-AT5G44100.1"/>
<dbReference type="ProteomicsDB" id="246707"/>
<dbReference type="EnsemblPlants" id="AT5G44100.1">
    <property type="protein sequence ID" value="AT5G44100.1"/>
    <property type="gene ID" value="AT5G44100"/>
</dbReference>
<dbReference type="EnsemblPlants" id="AT5G44100.2">
    <property type="protein sequence ID" value="AT5G44100.2"/>
    <property type="gene ID" value="AT5G44100"/>
</dbReference>
<dbReference type="GeneID" id="834433"/>
<dbReference type="Gramene" id="AT5G44100.1">
    <property type="protein sequence ID" value="AT5G44100.1"/>
    <property type="gene ID" value="AT5G44100"/>
</dbReference>
<dbReference type="Gramene" id="AT5G44100.2">
    <property type="protein sequence ID" value="AT5G44100.2"/>
    <property type="gene ID" value="AT5G44100"/>
</dbReference>
<dbReference type="KEGG" id="ath:AT5G44100"/>
<dbReference type="Araport" id="AT5G44100"/>
<dbReference type="TAIR" id="AT5G44100">
    <property type="gene designation" value="CKL7"/>
</dbReference>
<dbReference type="eggNOG" id="KOG1164">
    <property type="taxonomic scope" value="Eukaryota"/>
</dbReference>
<dbReference type="HOGENOM" id="CLU_019279_0_2_1"/>
<dbReference type="InParanoid" id="Q9FFH8"/>
<dbReference type="OMA" id="RVQAGYE"/>
<dbReference type="OrthoDB" id="5800476at2759"/>
<dbReference type="PhylomeDB" id="Q9FFH8"/>
<dbReference type="PRO" id="PR:Q9FFH8"/>
<dbReference type="Proteomes" id="UP000006548">
    <property type="component" value="Chromosome 5"/>
</dbReference>
<dbReference type="ExpressionAtlas" id="Q9FFH8">
    <property type="expression patterns" value="baseline and differential"/>
</dbReference>
<dbReference type="GO" id="GO:0005737">
    <property type="term" value="C:cytoplasm"/>
    <property type="evidence" value="ECO:0000314"/>
    <property type="project" value="UniProtKB"/>
</dbReference>
<dbReference type="GO" id="GO:0090397">
    <property type="term" value="C:stigma papilla"/>
    <property type="evidence" value="ECO:0000314"/>
    <property type="project" value="TAIR"/>
</dbReference>
<dbReference type="GO" id="GO:0005524">
    <property type="term" value="F:ATP binding"/>
    <property type="evidence" value="ECO:0007669"/>
    <property type="project" value="UniProtKB-KW"/>
</dbReference>
<dbReference type="GO" id="GO:0106310">
    <property type="term" value="F:protein serine kinase activity"/>
    <property type="evidence" value="ECO:0007669"/>
    <property type="project" value="RHEA"/>
</dbReference>
<dbReference type="GO" id="GO:0004674">
    <property type="term" value="F:protein serine/threonine kinase activity"/>
    <property type="evidence" value="ECO:0007669"/>
    <property type="project" value="UniProtKB-KW"/>
</dbReference>
<dbReference type="CDD" id="cd14125">
    <property type="entry name" value="STKc_CK1_delta_epsilon"/>
    <property type="match status" value="1"/>
</dbReference>
<dbReference type="FunFam" id="1.10.510.10:FF:000164">
    <property type="entry name" value="Casein kinase 1-like protein"/>
    <property type="match status" value="1"/>
</dbReference>
<dbReference type="FunFam" id="3.30.200.20:FF:000538">
    <property type="entry name" value="Putative Casein kinase I"/>
    <property type="match status" value="1"/>
</dbReference>
<dbReference type="Gene3D" id="1.10.510.10">
    <property type="entry name" value="Transferase(Phosphotransferase) domain 1"/>
    <property type="match status" value="1"/>
</dbReference>
<dbReference type="InterPro" id="IPR050235">
    <property type="entry name" value="CK1_Ser-Thr_kinase"/>
</dbReference>
<dbReference type="InterPro" id="IPR011009">
    <property type="entry name" value="Kinase-like_dom_sf"/>
</dbReference>
<dbReference type="InterPro" id="IPR000719">
    <property type="entry name" value="Prot_kinase_dom"/>
</dbReference>
<dbReference type="InterPro" id="IPR017441">
    <property type="entry name" value="Protein_kinase_ATP_BS"/>
</dbReference>
<dbReference type="InterPro" id="IPR008271">
    <property type="entry name" value="Ser/Thr_kinase_AS"/>
</dbReference>
<dbReference type="PANTHER" id="PTHR11909">
    <property type="entry name" value="CASEIN KINASE-RELATED"/>
    <property type="match status" value="1"/>
</dbReference>
<dbReference type="Pfam" id="PF00069">
    <property type="entry name" value="Pkinase"/>
    <property type="match status" value="1"/>
</dbReference>
<dbReference type="SMART" id="SM00220">
    <property type="entry name" value="S_TKc"/>
    <property type="match status" value="1"/>
</dbReference>
<dbReference type="SUPFAM" id="SSF56112">
    <property type="entry name" value="Protein kinase-like (PK-like)"/>
    <property type="match status" value="1"/>
</dbReference>
<dbReference type="PROSITE" id="PS00107">
    <property type="entry name" value="PROTEIN_KINASE_ATP"/>
    <property type="match status" value="1"/>
</dbReference>
<dbReference type="PROSITE" id="PS50011">
    <property type="entry name" value="PROTEIN_KINASE_DOM"/>
    <property type="match status" value="1"/>
</dbReference>
<dbReference type="PROSITE" id="PS00108">
    <property type="entry name" value="PROTEIN_KINASE_ST"/>
    <property type="match status" value="1"/>
</dbReference>
<gene>
    <name evidence="5" type="primary">CKL7</name>
    <name evidence="7" type="ordered locus">At5g44100</name>
    <name evidence="8" type="ORF">MLN1.2</name>
</gene>
<sequence>MDLVIGGKFKLGKKIGSGSFGELYLGVNVQTGEEVAVKLENVKTKHPQLHYESKLYMLLQGGSGIPNIKWFGVEGDYSVMVIDLLGPSLEDLFNYCNRKLTLKTVLMLADQLLNRVEFMHTRGFLHRDIKPDNFLMGLGRKANQVYIIDFGLGKKYRDLQTHKHIPYRENKNLTGTARYASVNTHLGVEQSRRDDLESLGYVLMYFLKGSLPWQGLKAGTKKQKYDRISEKKVSTPIEVLCKNQPSEFVSYFHYCRSLRFDDKPDYSYLKRLFRDLFIREGYQFDYVFDWTVLKYPQIGSSSGSSSRTRHHTTAKPGFNADPIERQERILGKETTRYKIPGAVEAFSRRHPTTTSSPRDRSRSRNSDDGPFSKQTHGDSERANSSSRYRASSSRKAVAASSSRPSSAGGPSESRTSSRLVSSSGGGGSGSGNGRPSTSQRVQAGYESKTLSFSRATAARNTREDQLRSFELLSLRK</sequence>
<name>CKL7_ARATH</name>
<protein>
    <recommendedName>
        <fullName evidence="6">Casein kinase 1-like protein 7</fullName>
        <ecNumber evidence="6">2.7.11.1</ecNumber>
    </recommendedName>
    <alternativeName>
        <fullName evidence="5">Protein CASEIN KINASE I-LIKE 7</fullName>
    </alternativeName>
</protein>